<name>NPC2_EMENI</name>
<keyword id="KW-0445">Lipid transport</keyword>
<keyword id="KW-1185">Reference proteome</keyword>
<keyword id="KW-0964">Secreted</keyword>
<keyword id="KW-0732">Signal</keyword>
<keyword id="KW-0813">Transport</keyword>
<proteinExistence type="inferred from homology"/>
<sequence>MKLLSPATALLFLAPLAVTATPASFFGYTQDVIAEGAPVRGDNPLEYCSEPSGDILEINSVDLAPNPPKAGTTLKIRAAGNLHERIEAGAYVVLEVKYGLITLLRDTADLCAQLTNVDLQCPLEEGPMVLTKEVDLPSQIPRGRYTVHADVYTKDNKRITCLDAKNIQF</sequence>
<gene>
    <name type="primary">npc2</name>
    <name type="ORF">AN5879</name>
</gene>
<dbReference type="EMBL" id="AACD01000100">
    <property type="protein sequence ID" value="EAA58388.1"/>
    <property type="molecule type" value="Genomic_DNA"/>
</dbReference>
<dbReference type="EMBL" id="BN001301">
    <property type="protein sequence ID" value="CBF70649.1"/>
    <property type="molecule type" value="Genomic_DNA"/>
</dbReference>
<dbReference type="RefSeq" id="XP_663483.1">
    <property type="nucleotide sequence ID" value="XM_658391.1"/>
</dbReference>
<dbReference type="SMR" id="Q5B0Q1"/>
<dbReference type="FunCoup" id="Q5B0Q1">
    <property type="interactions" value="104"/>
</dbReference>
<dbReference type="STRING" id="227321.Q5B0Q1"/>
<dbReference type="EnsemblFungi" id="CBF70649">
    <property type="protein sequence ID" value="CBF70649"/>
    <property type="gene ID" value="ANIA_05879"/>
</dbReference>
<dbReference type="KEGG" id="ani:ANIA_05879"/>
<dbReference type="VEuPathDB" id="FungiDB:AN5879"/>
<dbReference type="eggNOG" id="KOG4680">
    <property type="taxonomic scope" value="Eukaryota"/>
</dbReference>
<dbReference type="HOGENOM" id="CLU_097982_0_0_1"/>
<dbReference type="InParanoid" id="Q5B0Q1"/>
<dbReference type="OMA" id="HQTYDLC"/>
<dbReference type="OrthoDB" id="6409159at2759"/>
<dbReference type="Proteomes" id="UP000000560">
    <property type="component" value="Chromosome I"/>
</dbReference>
<dbReference type="GO" id="GO:0005576">
    <property type="term" value="C:extracellular region"/>
    <property type="evidence" value="ECO:0000314"/>
    <property type="project" value="AspGD"/>
</dbReference>
<dbReference type="GO" id="GO:0000328">
    <property type="term" value="C:fungal-type vacuole lumen"/>
    <property type="evidence" value="ECO:0007669"/>
    <property type="project" value="EnsemblFungi"/>
</dbReference>
<dbReference type="GO" id="GO:0031210">
    <property type="term" value="F:phosphatidylcholine binding"/>
    <property type="evidence" value="ECO:0007669"/>
    <property type="project" value="EnsemblFungi"/>
</dbReference>
<dbReference type="GO" id="GO:0035091">
    <property type="term" value="F:phosphatidylinositol binding"/>
    <property type="evidence" value="ECO:0007669"/>
    <property type="project" value="EnsemblFungi"/>
</dbReference>
<dbReference type="GO" id="GO:0001786">
    <property type="term" value="F:phosphatidylserine binding"/>
    <property type="evidence" value="ECO:0007669"/>
    <property type="project" value="EnsemblFungi"/>
</dbReference>
<dbReference type="GO" id="GO:0032934">
    <property type="term" value="F:sterol binding"/>
    <property type="evidence" value="ECO:0000318"/>
    <property type="project" value="GO_Central"/>
</dbReference>
<dbReference type="GO" id="GO:0032366">
    <property type="term" value="P:intracellular sterol transport"/>
    <property type="evidence" value="ECO:0007669"/>
    <property type="project" value="EnsemblFungi"/>
</dbReference>
<dbReference type="GO" id="GO:0015918">
    <property type="term" value="P:sterol transport"/>
    <property type="evidence" value="ECO:0000318"/>
    <property type="project" value="GO_Central"/>
</dbReference>
<dbReference type="CDD" id="cd00917">
    <property type="entry name" value="PG-PI_TP"/>
    <property type="match status" value="1"/>
</dbReference>
<dbReference type="FunFam" id="2.60.40.770:FF:000004">
    <property type="entry name" value="Phosphatidylglycerol/phosphatidylinositol transfer protein"/>
    <property type="match status" value="1"/>
</dbReference>
<dbReference type="Gene3D" id="2.60.40.770">
    <property type="match status" value="1"/>
</dbReference>
<dbReference type="InterPro" id="IPR014756">
    <property type="entry name" value="Ig_E-set"/>
</dbReference>
<dbReference type="InterPro" id="IPR003172">
    <property type="entry name" value="ML_dom"/>
</dbReference>
<dbReference type="InterPro" id="IPR033917">
    <property type="entry name" value="ML_PG-PI_TP"/>
</dbReference>
<dbReference type="InterPro" id="IPR039670">
    <property type="entry name" value="NPC2-like"/>
</dbReference>
<dbReference type="PANTHER" id="PTHR11306">
    <property type="entry name" value="NIEMANN PICK TYPE C2 PROTEIN NPC2-RELATED"/>
    <property type="match status" value="1"/>
</dbReference>
<dbReference type="PANTHER" id="PTHR11306:SF0">
    <property type="entry name" value="PHOSPHATIDYLGLYCEROL_PHOSPHATIDYLINOSITOL TRANSFER PROTEIN"/>
    <property type="match status" value="1"/>
</dbReference>
<dbReference type="Pfam" id="PF02221">
    <property type="entry name" value="E1_DerP2_DerF2"/>
    <property type="match status" value="1"/>
</dbReference>
<dbReference type="SMART" id="SM00737">
    <property type="entry name" value="ML"/>
    <property type="match status" value="1"/>
</dbReference>
<dbReference type="SUPFAM" id="SSF81296">
    <property type="entry name" value="E set domains"/>
    <property type="match status" value="1"/>
</dbReference>
<comment type="function">
    <text evidence="1">Catalyzes the intermembrane transfer of phosphatidylglycerol and phosphatidylinositol.</text>
</comment>
<comment type="subunit">
    <text evidence="1">Monomer.</text>
</comment>
<comment type="subcellular location">
    <subcellularLocation>
        <location evidence="3">Secreted</location>
    </subcellularLocation>
</comment>
<comment type="similarity">
    <text evidence="4">Belongs to the NPC2 family.</text>
</comment>
<evidence type="ECO:0000250" key="1"/>
<evidence type="ECO:0000255" key="2"/>
<evidence type="ECO:0000269" key="3">
    <source>
    </source>
</evidence>
<evidence type="ECO:0000305" key="4"/>
<protein>
    <recommendedName>
        <fullName>Phosphatidylglycerol/phosphatidylinositol transfer protein</fullName>
        <shortName>PG/PI-TP</shortName>
    </recommendedName>
</protein>
<organism>
    <name type="scientific">Emericella nidulans (strain FGSC A4 / ATCC 38163 / CBS 112.46 / NRRL 194 / M139)</name>
    <name type="common">Aspergillus nidulans</name>
    <dbReference type="NCBI Taxonomy" id="227321"/>
    <lineage>
        <taxon>Eukaryota</taxon>
        <taxon>Fungi</taxon>
        <taxon>Dikarya</taxon>
        <taxon>Ascomycota</taxon>
        <taxon>Pezizomycotina</taxon>
        <taxon>Eurotiomycetes</taxon>
        <taxon>Eurotiomycetidae</taxon>
        <taxon>Eurotiales</taxon>
        <taxon>Aspergillaceae</taxon>
        <taxon>Aspergillus</taxon>
        <taxon>Aspergillus subgen. Nidulantes</taxon>
    </lineage>
</organism>
<feature type="signal peptide" evidence="2">
    <location>
        <begin position="1"/>
        <end position="19"/>
    </location>
</feature>
<feature type="propeptide" id="PRO_0000019883" evidence="1">
    <location>
        <begin position="20"/>
        <end position="35"/>
    </location>
</feature>
<feature type="chain" id="PRO_0000019884" description="Phosphatidylglycerol/phosphatidylinositol transfer protein">
    <location>
        <begin position="36"/>
        <end position="169"/>
    </location>
</feature>
<reference key="1">
    <citation type="journal article" date="2005" name="Nature">
        <title>Sequencing of Aspergillus nidulans and comparative analysis with A. fumigatus and A. oryzae.</title>
        <authorList>
            <person name="Galagan J.E."/>
            <person name="Calvo S.E."/>
            <person name="Cuomo C."/>
            <person name="Ma L.-J."/>
            <person name="Wortman J.R."/>
            <person name="Batzoglou S."/>
            <person name="Lee S.-I."/>
            <person name="Bastuerkmen M."/>
            <person name="Spevak C.C."/>
            <person name="Clutterbuck J."/>
            <person name="Kapitonov V."/>
            <person name="Jurka J."/>
            <person name="Scazzocchio C."/>
            <person name="Farman M.L."/>
            <person name="Butler J."/>
            <person name="Purcell S."/>
            <person name="Harris S."/>
            <person name="Braus G.H."/>
            <person name="Draht O."/>
            <person name="Busch S."/>
            <person name="D'Enfert C."/>
            <person name="Bouchier C."/>
            <person name="Goldman G.H."/>
            <person name="Bell-Pedersen D."/>
            <person name="Griffiths-Jones S."/>
            <person name="Doonan J.H."/>
            <person name="Yu J."/>
            <person name="Vienken K."/>
            <person name="Pain A."/>
            <person name="Freitag M."/>
            <person name="Selker E.U."/>
            <person name="Archer D.B."/>
            <person name="Penalva M.A."/>
            <person name="Oakley B.R."/>
            <person name="Momany M."/>
            <person name="Tanaka T."/>
            <person name="Kumagai T."/>
            <person name="Asai K."/>
            <person name="Machida M."/>
            <person name="Nierman W.C."/>
            <person name="Denning D.W."/>
            <person name="Caddick M.X."/>
            <person name="Hynes M."/>
            <person name="Paoletti M."/>
            <person name="Fischer R."/>
            <person name="Miller B.L."/>
            <person name="Dyer P.S."/>
            <person name="Sachs M.S."/>
            <person name="Osmani S.A."/>
            <person name="Birren B.W."/>
        </authorList>
    </citation>
    <scope>NUCLEOTIDE SEQUENCE [LARGE SCALE GENOMIC DNA]</scope>
    <source>
        <strain>FGSC A4 / ATCC 38163 / CBS 112.46 / NRRL 194 / M139</strain>
    </source>
</reference>
<reference key="2">
    <citation type="journal article" date="2009" name="Fungal Genet. Biol.">
        <title>The 2008 update of the Aspergillus nidulans genome annotation: a community effort.</title>
        <authorList>
            <person name="Wortman J.R."/>
            <person name="Gilsenan J.M."/>
            <person name="Joardar V."/>
            <person name="Deegan J."/>
            <person name="Clutterbuck J."/>
            <person name="Andersen M.R."/>
            <person name="Archer D."/>
            <person name="Bencina M."/>
            <person name="Braus G."/>
            <person name="Coutinho P."/>
            <person name="von Dohren H."/>
            <person name="Doonan J."/>
            <person name="Driessen A.J."/>
            <person name="Durek P."/>
            <person name="Espeso E."/>
            <person name="Fekete E."/>
            <person name="Flipphi M."/>
            <person name="Estrada C.G."/>
            <person name="Geysens S."/>
            <person name="Goldman G."/>
            <person name="de Groot P.W."/>
            <person name="Hansen K."/>
            <person name="Harris S.D."/>
            <person name="Heinekamp T."/>
            <person name="Helmstaedt K."/>
            <person name="Henrissat B."/>
            <person name="Hofmann G."/>
            <person name="Homan T."/>
            <person name="Horio T."/>
            <person name="Horiuchi H."/>
            <person name="James S."/>
            <person name="Jones M."/>
            <person name="Karaffa L."/>
            <person name="Karanyi Z."/>
            <person name="Kato M."/>
            <person name="Keller N."/>
            <person name="Kelly D.E."/>
            <person name="Kiel J.A."/>
            <person name="Kim J.M."/>
            <person name="van der Klei I.J."/>
            <person name="Klis F.M."/>
            <person name="Kovalchuk A."/>
            <person name="Krasevec N."/>
            <person name="Kubicek C.P."/>
            <person name="Liu B."/>
            <person name="Maccabe A."/>
            <person name="Meyer V."/>
            <person name="Mirabito P."/>
            <person name="Miskei M."/>
            <person name="Mos M."/>
            <person name="Mullins J."/>
            <person name="Nelson D.R."/>
            <person name="Nielsen J."/>
            <person name="Oakley B.R."/>
            <person name="Osmani S.A."/>
            <person name="Pakula T."/>
            <person name="Paszewski A."/>
            <person name="Paulsen I."/>
            <person name="Pilsyk S."/>
            <person name="Pocsi I."/>
            <person name="Punt P.J."/>
            <person name="Ram A.F."/>
            <person name="Ren Q."/>
            <person name="Robellet X."/>
            <person name="Robson G."/>
            <person name="Seiboth B."/>
            <person name="van Solingen P."/>
            <person name="Specht T."/>
            <person name="Sun J."/>
            <person name="Taheri-Talesh N."/>
            <person name="Takeshita N."/>
            <person name="Ussery D."/>
            <person name="vanKuyk P.A."/>
            <person name="Visser H."/>
            <person name="van de Vondervoort P.J."/>
            <person name="de Vries R.P."/>
            <person name="Walton J."/>
            <person name="Xiang X."/>
            <person name="Xiong Y."/>
            <person name="Zeng A.P."/>
            <person name="Brandt B.W."/>
            <person name="Cornell M.J."/>
            <person name="van den Hondel C.A."/>
            <person name="Visser J."/>
            <person name="Oliver S.G."/>
            <person name="Turner G."/>
        </authorList>
    </citation>
    <scope>GENOME REANNOTATION</scope>
    <source>
        <strain>FGSC A4 / ATCC 38163 / CBS 112.46 / NRRL 194 / M139</strain>
    </source>
</reference>
<reference key="3">
    <citation type="journal article" date="2014" name="BMC Genomics">
        <title>Elucidating how the saprophytic fungus Aspergillus nidulans uses the plant polyester suberin as carbon source.</title>
        <authorList>
            <person name="Martins I."/>
            <person name="Hartmann D.O."/>
            <person name="Alves P.C."/>
            <person name="Martins C."/>
            <person name="Garcia H."/>
            <person name="Leclercq C.C."/>
            <person name="Ferreira R."/>
            <person name="He J."/>
            <person name="Renaut J."/>
            <person name="Becker J.D."/>
            <person name="Silva Pereira C."/>
        </authorList>
    </citation>
    <scope>SUBCELLULAR LOCATION</scope>
</reference>
<accession>Q5B0Q1</accession>
<accession>C8UZX4</accession>